<name>Y427_AQUAE</name>
<feature type="chain" id="PRO_0000186860" description="Uncharacterized protein aq_427">
    <location>
        <begin position="1"/>
        <end position="121"/>
    </location>
</feature>
<organism>
    <name type="scientific">Aquifex aeolicus (strain VF5)</name>
    <dbReference type="NCBI Taxonomy" id="224324"/>
    <lineage>
        <taxon>Bacteria</taxon>
        <taxon>Pseudomonadati</taxon>
        <taxon>Aquificota</taxon>
        <taxon>Aquificia</taxon>
        <taxon>Aquificales</taxon>
        <taxon>Aquificaceae</taxon>
        <taxon>Aquifex</taxon>
    </lineage>
</organism>
<reference key="1">
    <citation type="journal article" date="1998" name="Nature">
        <title>The complete genome of the hyperthermophilic bacterium Aquifex aeolicus.</title>
        <authorList>
            <person name="Deckert G."/>
            <person name="Warren P.V."/>
            <person name="Gaasterland T."/>
            <person name="Young W.G."/>
            <person name="Lenox A.L."/>
            <person name="Graham D.E."/>
            <person name="Overbeek R."/>
            <person name="Snead M.A."/>
            <person name="Keller M."/>
            <person name="Aujay M."/>
            <person name="Huber R."/>
            <person name="Feldman R.A."/>
            <person name="Short J.M."/>
            <person name="Olsen G.J."/>
            <person name="Swanson R.V."/>
        </authorList>
    </citation>
    <scope>NUCLEOTIDE SEQUENCE [LARGE SCALE GENOMIC DNA]</scope>
    <source>
        <strain>VF5</strain>
    </source>
</reference>
<sequence>MNLFEYKLSVVRQVMDKYEVAEEAKFISGLSKGSMVNALSRKKKLPNKEAKFTRYVIYTVDVERIIDMMEEPYRTVIKKRYYDASLDTVKKDFGLQNKREAYFLVKKSVNKFYDLLENYWK</sequence>
<accession>O66741</accession>
<keyword id="KW-1185">Reference proteome</keyword>
<proteinExistence type="predicted"/>
<protein>
    <recommendedName>
        <fullName>Uncharacterized protein aq_427</fullName>
    </recommendedName>
</protein>
<dbReference type="EMBL" id="AE000657">
    <property type="protein sequence ID" value="AAC06700.1"/>
    <property type="molecule type" value="Genomic_DNA"/>
</dbReference>
<dbReference type="PIR" id="A70339">
    <property type="entry name" value="A70339"/>
</dbReference>
<dbReference type="RefSeq" id="NP_213301.1">
    <property type="nucleotide sequence ID" value="NC_000918.1"/>
</dbReference>
<dbReference type="RefSeq" id="WP_010880239.1">
    <property type="nucleotide sequence ID" value="NC_000918.1"/>
</dbReference>
<dbReference type="SMR" id="O66741"/>
<dbReference type="STRING" id="224324.aq_427"/>
<dbReference type="EnsemblBacteria" id="AAC06700">
    <property type="protein sequence ID" value="AAC06700"/>
    <property type="gene ID" value="aq_427"/>
</dbReference>
<dbReference type="KEGG" id="aae:aq_427"/>
<dbReference type="HOGENOM" id="CLU_2033255_0_0_0"/>
<dbReference type="InParanoid" id="O66741"/>
<dbReference type="Proteomes" id="UP000000798">
    <property type="component" value="Chromosome"/>
</dbReference>
<gene>
    <name type="ordered locus">aq_427</name>
</gene>